<organism>
    <name type="scientific">Brucella ovis (strain ATCC 25840 / 63/290 / NCTC 10512)</name>
    <dbReference type="NCBI Taxonomy" id="444178"/>
    <lineage>
        <taxon>Bacteria</taxon>
        <taxon>Pseudomonadati</taxon>
        <taxon>Pseudomonadota</taxon>
        <taxon>Alphaproteobacteria</taxon>
        <taxon>Hyphomicrobiales</taxon>
        <taxon>Brucellaceae</taxon>
        <taxon>Brucella/Ochrobactrum group</taxon>
        <taxon>Brucella</taxon>
    </lineage>
</organism>
<name>SYH_BRUO2</name>
<dbReference type="EC" id="6.1.1.21" evidence="1"/>
<dbReference type="EMBL" id="CP000709">
    <property type="protein sequence ID" value="ABQ61997.1"/>
    <property type="molecule type" value="Genomic_DNA"/>
</dbReference>
<dbReference type="RefSeq" id="WP_006015175.1">
    <property type="nucleotide sequence ID" value="NC_009504.1"/>
</dbReference>
<dbReference type="SMR" id="A5VTT4"/>
<dbReference type="GeneID" id="45125586"/>
<dbReference type="KEGG" id="bov:BOV_A0169"/>
<dbReference type="HOGENOM" id="CLU_025113_3_2_5"/>
<dbReference type="PhylomeDB" id="A5VTT4"/>
<dbReference type="Proteomes" id="UP000006383">
    <property type="component" value="Chromosome II"/>
</dbReference>
<dbReference type="GO" id="GO:0005737">
    <property type="term" value="C:cytoplasm"/>
    <property type="evidence" value="ECO:0007669"/>
    <property type="project" value="UniProtKB-SubCell"/>
</dbReference>
<dbReference type="GO" id="GO:0005524">
    <property type="term" value="F:ATP binding"/>
    <property type="evidence" value="ECO:0007669"/>
    <property type="project" value="UniProtKB-UniRule"/>
</dbReference>
<dbReference type="GO" id="GO:0004821">
    <property type="term" value="F:histidine-tRNA ligase activity"/>
    <property type="evidence" value="ECO:0007669"/>
    <property type="project" value="UniProtKB-UniRule"/>
</dbReference>
<dbReference type="GO" id="GO:0006427">
    <property type="term" value="P:histidyl-tRNA aminoacylation"/>
    <property type="evidence" value="ECO:0007669"/>
    <property type="project" value="UniProtKB-UniRule"/>
</dbReference>
<dbReference type="CDD" id="cd00773">
    <property type="entry name" value="HisRS-like_core"/>
    <property type="match status" value="1"/>
</dbReference>
<dbReference type="CDD" id="cd00859">
    <property type="entry name" value="HisRS_anticodon"/>
    <property type="match status" value="1"/>
</dbReference>
<dbReference type="Gene3D" id="3.40.50.800">
    <property type="entry name" value="Anticodon-binding domain"/>
    <property type="match status" value="1"/>
</dbReference>
<dbReference type="Gene3D" id="3.30.930.10">
    <property type="entry name" value="Bira Bifunctional Protein, Domain 2"/>
    <property type="match status" value="1"/>
</dbReference>
<dbReference type="HAMAP" id="MF_00127">
    <property type="entry name" value="His_tRNA_synth"/>
    <property type="match status" value="1"/>
</dbReference>
<dbReference type="InterPro" id="IPR006195">
    <property type="entry name" value="aa-tRNA-synth_II"/>
</dbReference>
<dbReference type="InterPro" id="IPR045864">
    <property type="entry name" value="aa-tRNA-synth_II/BPL/LPL"/>
</dbReference>
<dbReference type="InterPro" id="IPR004154">
    <property type="entry name" value="Anticodon-bd"/>
</dbReference>
<dbReference type="InterPro" id="IPR036621">
    <property type="entry name" value="Anticodon-bd_dom_sf"/>
</dbReference>
<dbReference type="InterPro" id="IPR015807">
    <property type="entry name" value="His-tRNA-ligase"/>
</dbReference>
<dbReference type="InterPro" id="IPR041715">
    <property type="entry name" value="HisRS-like_core"/>
</dbReference>
<dbReference type="InterPro" id="IPR004516">
    <property type="entry name" value="HisRS/HisZ"/>
</dbReference>
<dbReference type="InterPro" id="IPR033656">
    <property type="entry name" value="HisRS_anticodon"/>
</dbReference>
<dbReference type="NCBIfam" id="TIGR00442">
    <property type="entry name" value="hisS"/>
    <property type="match status" value="1"/>
</dbReference>
<dbReference type="PANTHER" id="PTHR11476:SF7">
    <property type="entry name" value="HISTIDINE--TRNA LIGASE"/>
    <property type="match status" value="1"/>
</dbReference>
<dbReference type="PANTHER" id="PTHR11476">
    <property type="entry name" value="HISTIDYL-TRNA SYNTHETASE"/>
    <property type="match status" value="1"/>
</dbReference>
<dbReference type="Pfam" id="PF03129">
    <property type="entry name" value="HGTP_anticodon"/>
    <property type="match status" value="1"/>
</dbReference>
<dbReference type="Pfam" id="PF13393">
    <property type="entry name" value="tRNA-synt_His"/>
    <property type="match status" value="1"/>
</dbReference>
<dbReference type="PIRSF" id="PIRSF001549">
    <property type="entry name" value="His-tRNA_synth"/>
    <property type="match status" value="1"/>
</dbReference>
<dbReference type="SUPFAM" id="SSF52954">
    <property type="entry name" value="Class II aaRS ABD-related"/>
    <property type="match status" value="1"/>
</dbReference>
<dbReference type="SUPFAM" id="SSF55681">
    <property type="entry name" value="Class II aaRS and biotin synthetases"/>
    <property type="match status" value="1"/>
</dbReference>
<dbReference type="PROSITE" id="PS50862">
    <property type="entry name" value="AA_TRNA_LIGASE_II"/>
    <property type="match status" value="1"/>
</dbReference>
<comment type="catalytic activity">
    <reaction evidence="1">
        <text>tRNA(His) + L-histidine + ATP = L-histidyl-tRNA(His) + AMP + diphosphate + H(+)</text>
        <dbReference type="Rhea" id="RHEA:17313"/>
        <dbReference type="Rhea" id="RHEA-COMP:9665"/>
        <dbReference type="Rhea" id="RHEA-COMP:9689"/>
        <dbReference type="ChEBI" id="CHEBI:15378"/>
        <dbReference type="ChEBI" id="CHEBI:30616"/>
        <dbReference type="ChEBI" id="CHEBI:33019"/>
        <dbReference type="ChEBI" id="CHEBI:57595"/>
        <dbReference type="ChEBI" id="CHEBI:78442"/>
        <dbReference type="ChEBI" id="CHEBI:78527"/>
        <dbReference type="ChEBI" id="CHEBI:456215"/>
        <dbReference type="EC" id="6.1.1.21"/>
    </reaction>
</comment>
<comment type="subunit">
    <text evidence="1">Homodimer.</text>
</comment>
<comment type="subcellular location">
    <subcellularLocation>
        <location evidence="1">Cytoplasm</location>
    </subcellularLocation>
</comment>
<comment type="similarity">
    <text evidence="1">Belongs to the class-II aminoacyl-tRNA synthetase family.</text>
</comment>
<reference key="1">
    <citation type="journal article" date="2009" name="PLoS ONE">
        <title>Genome degradation in Brucella ovis corresponds with narrowing of its host range and tissue tropism.</title>
        <authorList>
            <person name="Tsolis R.M."/>
            <person name="Seshadri R."/>
            <person name="Santos R.L."/>
            <person name="Sangari F.J."/>
            <person name="Lobo J.M."/>
            <person name="de Jong M.F."/>
            <person name="Ren Q."/>
            <person name="Myers G."/>
            <person name="Brinkac L.M."/>
            <person name="Nelson W.C."/>
            <person name="Deboy R.T."/>
            <person name="Angiuoli S."/>
            <person name="Khouri H."/>
            <person name="Dimitrov G."/>
            <person name="Robinson J.R."/>
            <person name="Mulligan S."/>
            <person name="Walker R.L."/>
            <person name="Elzer P.E."/>
            <person name="Hassan K.A."/>
            <person name="Paulsen I.T."/>
        </authorList>
    </citation>
    <scope>NUCLEOTIDE SEQUENCE [LARGE SCALE GENOMIC DNA]</scope>
    <source>
        <strain>ATCC 25840 / 63/290 / NCTC 10512</strain>
    </source>
</reference>
<gene>
    <name evidence="1" type="primary">hisS</name>
    <name type="ordered locus">BOV_A0169</name>
</gene>
<sequence length="502" mass="55149">MADKADKMKARLPRGFVDRVPDDLRAAEKMMATIREVYDLYGFEPVETPLVEYTDALGKFLPDQDRPNEGVFSFQDDDEQWLSLRYDLTAPLARYVAENFETLPKPYRSYRNGWVFRNEKPGPGRFRQFMQFDADTVGAPNVSADAEMCMMMADALERLGIQRGDYAIRVNNRKVLDGVLDAIGLEGEGNAAKRLNVLRAIDKLDKFGPEGVRLLLGKGRLDESGDFTKGAQLPEAAIEKVLAFTAAGGADGAQTIANLQAVVAGNAKGEEGVQELADMQALFFAGGYEGRVKIDPSVVRGLEYYTGPVFEAELLFDVTNEDGQKVVFGSVGGGGRYDGLVSRFRGEPVPATGFSIGVSRLMTALKNLGKLDVSDTVGPVVVLVMDKDTQNLGRYQKMVSDLRKAGIRAEMYVGGSGMKAQMKYADRRAAPCVVIQGSQEREAGEVQIKDLVEGKRLSAEIEDNVTWRESRPAQITVREDGLVDAVREILDAQARDRAEQSK</sequence>
<proteinExistence type="inferred from homology"/>
<keyword id="KW-0030">Aminoacyl-tRNA synthetase</keyword>
<keyword id="KW-0067">ATP-binding</keyword>
<keyword id="KW-0963">Cytoplasm</keyword>
<keyword id="KW-0436">Ligase</keyword>
<keyword id="KW-0547">Nucleotide-binding</keyword>
<keyword id="KW-0648">Protein biosynthesis</keyword>
<feature type="chain" id="PRO_1000016318" description="Histidine--tRNA ligase">
    <location>
        <begin position="1"/>
        <end position="502"/>
    </location>
</feature>
<protein>
    <recommendedName>
        <fullName evidence="1">Histidine--tRNA ligase</fullName>
        <ecNumber evidence="1">6.1.1.21</ecNumber>
    </recommendedName>
    <alternativeName>
        <fullName evidence="1">Histidyl-tRNA synthetase</fullName>
        <shortName evidence="1">HisRS</shortName>
    </alternativeName>
</protein>
<accession>A5VTT4</accession>
<evidence type="ECO:0000255" key="1">
    <source>
        <dbReference type="HAMAP-Rule" id="MF_00127"/>
    </source>
</evidence>